<comment type="function">
    <text evidence="1 4 5 8 10 14">Interferon-induced, dsRNA-activated antiviral enzyme which plays a critical role in cellular innate antiviral response (PubMed:10464285, PubMed:9880569). Activated by detection of double stranded RNA (dsRNA): polymerizes higher oligomers of 2'-5'-oligoadenylates (2-5A) from ATP which then bind to the inactive monomeric form of ribonuclease L (RNASEL) leading to its dimerization and subsequent activation (PubMed:10464285, PubMed:11682059, PubMed:9880569). Activation of RNASEL leads to degradation of cellular as well as viral RNA, resulting in the inhibition of protein synthesis, thus terminating viral replication (PubMed:10464285, PubMed:9880569). Can mediate the antiviral effect via the classical RNASEL-dependent pathway or an alternative antiviral pathway independent of RNASEL (PubMed:21142819). In addition, it may also play a role in other cellular processes such as apoptosis, cell growth, differentiation and gene regulation (PubMed:21142819). May act as a negative regulator of lactation, stopping lactation in virally infected mammary gland lobules, thereby preventing transmission of viruses to neonates (By similarity). Non-infected lobules would not be affected, allowing efficient pup feeding during infection (By similarity).</text>
</comment>
<comment type="catalytic activity">
    <reaction evidence="4 5 6 10">
        <text>3 ATP = 5'-triphosphoadenylyl-(2'-&gt;5')-adenylyl-(2'-&gt;5')-adenosine + 2 diphosphate</text>
        <dbReference type="Rhea" id="RHEA:34407"/>
        <dbReference type="ChEBI" id="CHEBI:30616"/>
        <dbReference type="ChEBI" id="CHEBI:33019"/>
        <dbReference type="ChEBI" id="CHEBI:67143"/>
        <dbReference type="EC" id="2.7.7.84"/>
    </reaction>
</comment>
<comment type="cofactor">
    <cofactor evidence="5">
        <name>Mg(2+)</name>
        <dbReference type="ChEBI" id="CHEBI:18420"/>
    </cofactor>
</comment>
<comment type="activity regulation">
    <text evidence="5 10">Produced as a latent enzyme which is activated by double stranded RNA (dsRNA) generated during the course of viral infection (PubMed:9880569). The dsRNA activator must be at least 15 nucleotides long, and no modification of the 2'-hydroxyl group is tolerated (PubMed:9880569). ssRNA or dsDNA do not act as activators (PubMed:9880569). Strongly inhibited by copper, iron and zinc ions (PubMed:11682059). Partially inhibited by cobalt and nickel ions (PubMed:11682059).</text>
</comment>
<comment type="biophysicochemical properties">
    <kinetics>
        <KM evidence="4 6 10">2.1 mM for ATP</KM>
    </kinetics>
</comment>
<comment type="subunit">
    <text evidence="4 10">Homodimer.</text>
</comment>
<comment type="interaction">
    <interactant intactId="EBI-10211452">
        <id>P29728</id>
    </interactant>
    <interactant intactId="EBI-745579">
        <id>P49761</id>
        <label>CLK3</label>
    </interactant>
    <organismsDiffer>false</organismsDiffer>
    <experiments>4</experiments>
</comment>
<comment type="interaction">
    <interactant intactId="EBI-12270678">
        <id>P29728-2</id>
    </interactant>
    <interactant intactId="EBI-745579">
        <id>P49761</id>
        <label>CLK3</label>
    </interactant>
    <organismsDiffer>false</organismsDiffer>
    <experiments>5</experiments>
</comment>
<comment type="interaction">
    <interactant intactId="EBI-12270678">
        <id>P29728-2</id>
    </interactant>
    <interactant intactId="EBI-2510157">
        <id>Q96EF6</id>
        <label>FBXO17</label>
    </interactant>
    <organismsDiffer>false</organismsDiffer>
    <experiments>3</experiments>
</comment>
<comment type="subcellular location">
    <subcellularLocation>
        <location evidence="8">Cytoplasm</location>
    </subcellularLocation>
    <subcellularLocation>
        <location evidence="8">Cytoplasm</location>
        <location evidence="8">Perinuclear region</location>
    </subcellularLocation>
</comment>
<comment type="alternative products">
    <event type="alternative splicing"/>
    <isoform>
        <id>P29728-1</id>
        <name evidence="13">p71</name>
        <name evidence="13">71 kDa</name>
        <sequence type="displayed"/>
    </isoform>
    <isoform>
        <id>P29728-2</id>
        <name evidence="13 15">p69</name>
        <name evidence="13 15">69 kDa</name>
        <sequence type="described" ref="VSP_003741 VSP_003742"/>
    </isoform>
    <isoform>
        <id>P29728-3</id>
        <name>3</name>
        <sequence type="described" ref="VSP_043354 VSP_043355"/>
    </isoform>
</comment>
<comment type="induction">
    <text evidence="7">By type I interferon (IFN) and viruses.</text>
</comment>
<comment type="PTM">
    <text evidence="9 10">Myristoylation is not essential for its activity.</text>
</comment>
<comment type="PTM">
    <text evidence="10">Glycosylated. Glycosylation is essential for its activity.</text>
</comment>
<comment type="similarity">
    <text evidence="16">Belongs to the 2-5A synthase family.</text>
</comment>
<name>OAS2_HUMAN</name>
<organism>
    <name type="scientific">Homo sapiens</name>
    <name type="common">Human</name>
    <dbReference type="NCBI Taxonomy" id="9606"/>
    <lineage>
        <taxon>Eukaryota</taxon>
        <taxon>Metazoa</taxon>
        <taxon>Chordata</taxon>
        <taxon>Craniata</taxon>
        <taxon>Vertebrata</taxon>
        <taxon>Euteleostomi</taxon>
        <taxon>Mammalia</taxon>
        <taxon>Eutheria</taxon>
        <taxon>Euarchontoglires</taxon>
        <taxon>Primates</taxon>
        <taxon>Haplorrhini</taxon>
        <taxon>Catarrhini</taxon>
        <taxon>Hominidae</taxon>
        <taxon>Homo</taxon>
    </lineage>
</organism>
<feature type="initiator methionine" description="Removed" evidence="9">
    <location>
        <position position="1"/>
    </location>
</feature>
<feature type="chain" id="PRO_0000160264" description="2'-5'-oligoadenylate synthase 2">
    <location>
        <begin position="2"/>
        <end position="719"/>
    </location>
</feature>
<feature type="region of interest" description="OAS domain 1">
    <location>
        <begin position="11"/>
        <end position="335"/>
    </location>
</feature>
<feature type="region of interest" description="OAS domain 2">
    <location>
        <begin position="343"/>
        <end position="683"/>
    </location>
</feature>
<feature type="binding site" evidence="2">
    <location>
        <position position="396"/>
    </location>
    <ligand>
        <name>ATP</name>
        <dbReference type="ChEBI" id="CHEBI:30616"/>
    </ligand>
</feature>
<feature type="binding site" evidence="3">
    <location>
        <position position="408"/>
    </location>
    <ligand>
        <name>Mg(2+)</name>
        <dbReference type="ChEBI" id="CHEBI:18420"/>
        <note>catalytic</note>
    </ligand>
</feature>
<feature type="binding site" evidence="3">
    <location>
        <position position="410"/>
    </location>
    <ligand>
        <name>Mg(2+)</name>
        <dbReference type="ChEBI" id="CHEBI:18420"/>
        <note>catalytic</note>
    </ligand>
</feature>
<feature type="binding site" evidence="3">
    <location>
        <position position="481"/>
    </location>
    <ligand>
        <name>Mg(2+)</name>
        <dbReference type="ChEBI" id="CHEBI:18420"/>
        <note>catalytic</note>
    </ligand>
</feature>
<feature type="binding site" evidence="17">
    <location>
        <position position="544"/>
    </location>
    <ligand>
        <name>ATP</name>
        <dbReference type="ChEBI" id="CHEBI:30616"/>
    </ligand>
</feature>
<feature type="binding site" evidence="17">
    <location>
        <position position="547"/>
    </location>
    <ligand>
        <name>ATP</name>
        <dbReference type="ChEBI" id="CHEBI:30616"/>
    </ligand>
</feature>
<feature type="modified residue" description="N6-acetyllysine" evidence="19">
    <location>
        <position position="378"/>
    </location>
</feature>
<feature type="lipid moiety-binding region" description="N-myristoyl glycine" evidence="9">
    <location>
        <position position="2"/>
    </location>
</feature>
<feature type="splice variant" id="VSP_043354" description="In isoform 3." evidence="12">
    <original>LNDNPSPWIYRELKRSLDKTNA</original>
    <variation>KHCWVSGEKSQRSGCQTALCNL</variation>
    <location>
        <begin position="151"/>
        <end position="172"/>
    </location>
</feature>
<feature type="splice variant" id="VSP_043355" description="In isoform 3." evidence="12">
    <location>
        <begin position="173"/>
        <end position="719"/>
    </location>
</feature>
<feature type="splice variant" id="VSP_003741" description="In isoform p69." evidence="11 12 13">
    <original>TMQT</original>
    <variation>VKVI</variation>
    <location>
        <begin position="684"/>
        <end position="687"/>
    </location>
</feature>
<feature type="splice variant" id="VSP_003742" description="In isoform p69." evidence="11 12 13">
    <location>
        <begin position="688"/>
        <end position="719"/>
    </location>
</feature>
<feature type="mutagenesis site" description="No loss of activity." evidence="10">
    <original>G</original>
    <variation>A</variation>
    <variation>D</variation>
    <location>
        <position position="2"/>
    </location>
</feature>
<feature type="mutagenesis site" description="Loss of activity; when associated with A-410." evidence="4">
    <original>D</original>
    <variation>A</variation>
    <location>
        <position position="408"/>
    </location>
</feature>
<feature type="mutagenesis site" description="Loss of activity; when associated with A-408." evidence="4">
    <original>D</original>
    <variation>A</variation>
    <location>
        <position position="410"/>
    </location>
</feature>
<feature type="mutagenesis site" description="Significant loss of activity." evidence="6">
    <original>Y</original>
    <variation>P</variation>
    <variation>A</variation>
    <location>
        <position position="421"/>
    </location>
</feature>
<feature type="mutagenesis site" description="Loss of activity." evidence="4">
    <original>D</original>
    <variation>A</variation>
    <location>
        <position position="481"/>
    </location>
</feature>
<feature type="mutagenesis site" description="Significant loss of activity." evidence="6">
    <original>R</original>
    <variation>A</variation>
    <variation>Y</variation>
    <location>
        <position position="544"/>
    </location>
</feature>
<feature type="mutagenesis site" description="Partial loss of activity." evidence="6">
    <original>K</original>
    <variation>A</variation>
    <location>
        <position position="547"/>
    </location>
</feature>
<feature type="mutagenesis site" description="Loss of activity; when associated with A-669 and A-670." evidence="4">
    <original>C</original>
    <variation>A</variation>
    <location>
        <position position="668"/>
    </location>
</feature>
<feature type="mutagenesis site" description="Loss of activity; when associated with A-668 and A-670." evidence="4">
    <original>F</original>
    <variation>A</variation>
    <location>
        <position position="669"/>
    </location>
</feature>
<feature type="mutagenesis site" description="Loss of activity; when associated with A-668 and A-669." evidence="4">
    <original>K</original>
    <variation>A</variation>
    <location>
        <position position="670"/>
    </location>
</feature>
<feature type="sequence conflict" description="In Ref. 1; AAA60607/AAA60606." evidence="16" ref="1">
    <original>LQE</original>
    <variation>CRN</variation>
    <location>
        <begin position="45"/>
        <end position="47"/>
    </location>
</feature>
<feature type="sequence conflict" description="In Ref. 1; AAA60607/AAA60606." evidence="16" ref="1">
    <original>F</original>
    <variation>S</variation>
    <location>
        <position position="127"/>
    </location>
</feature>
<feature type="sequence conflict" description="In Ref. 1; AAA60607/AAA60606." evidence="16" ref="1">
    <original>C</original>
    <variation>G</variation>
    <location>
        <position position="606"/>
    </location>
</feature>
<feature type="sequence conflict" description="In Ref. 1; AAA60607/AAA60606." evidence="16" ref="1">
    <original>A</original>
    <variation>G</variation>
    <location>
        <position position="639"/>
    </location>
</feature>
<feature type="sequence conflict" description="In Ref. 1; AAA60607/AAA60606." evidence="16" ref="1">
    <original>A</original>
    <variation>D</variation>
    <location>
        <position position="657"/>
    </location>
</feature>
<feature type="sequence conflict" description="In Ref. 1; AAA60607/AAA60606." evidence="16" ref="1">
    <original>EW</original>
    <variation>VR</variation>
    <location>
        <begin position="662"/>
        <end position="663"/>
    </location>
</feature>
<feature type="sequence conflict" description="In Ref. 1; AAA60607." evidence="16" ref="1">
    <original>F</original>
    <variation>FWRSSGNRF</variation>
    <location>
        <position position="719"/>
    </location>
</feature>
<gene>
    <name evidence="18" type="primary">OAS2</name>
</gene>
<evidence type="ECO:0000250" key="1">
    <source>
        <dbReference type="UniProtKB" id="E9Q9A9"/>
    </source>
</evidence>
<evidence type="ECO:0000250" key="2">
    <source>
        <dbReference type="UniProtKB" id="P00973"/>
    </source>
</evidence>
<evidence type="ECO:0000255" key="3"/>
<evidence type="ECO:0000269" key="4">
    <source>
    </source>
</evidence>
<evidence type="ECO:0000269" key="5">
    <source>
    </source>
</evidence>
<evidence type="ECO:0000269" key="6">
    <source>
    </source>
</evidence>
<evidence type="ECO:0000269" key="7">
    <source>
    </source>
</evidence>
<evidence type="ECO:0000269" key="8">
    <source>
    </source>
</evidence>
<evidence type="ECO:0000269" key="9">
    <source>
    </source>
</evidence>
<evidence type="ECO:0000269" key="10">
    <source>
    </source>
</evidence>
<evidence type="ECO:0000303" key="11">
    <source>
    </source>
</evidence>
<evidence type="ECO:0000303" key="12">
    <source>
    </source>
</evidence>
<evidence type="ECO:0000303" key="13">
    <source>
    </source>
</evidence>
<evidence type="ECO:0000303" key="14">
    <source>
    </source>
</evidence>
<evidence type="ECO:0000303" key="15">
    <source>
    </source>
</evidence>
<evidence type="ECO:0000305" key="16"/>
<evidence type="ECO:0000305" key="17">
    <source>
    </source>
</evidence>
<evidence type="ECO:0000312" key="18">
    <source>
        <dbReference type="HGNC" id="HGNC:8087"/>
    </source>
</evidence>
<evidence type="ECO:0007744" key="19">
    <source>
    </source>
</evidence>
<protein>
    <recommendedName>
        <fullName>2'-5'-oligoadenylate synthase 2</fullName>
        <shortName>(2-5')oligo(A) synthase 2</shortName>
        <shortName>2-5A synthase 2</shortName>
        <ecNumber evidence="4 6 10">2.7.7.84</ecNumber>
    </recommendedName>
    <alternativeName>
        <fullName evidence="13">p69 OAS / p71 OAS</fullName>
        <shortName evidence="13">p69OAS / p71OAS</shortName>
    </alternativeName>
</protein>
<keyword id="KW-0007">Acetylation</keyword>
<keyword id="KW-0025">Alternative splicing</keyword>
<keyword id="KW-0051">Antiviral defense</keyword>
<keyword id="KW-0067">ATP-binding</keyword>
<keyword id="KW-0963">Cytoplasm</keyword>
<keyword id="KW-0903">Direct protein sequencing</keyword>
<keyword id="KW-0325">Glycoprotein</keyword>
<keyword id="KW-0391">Immunity</keyword>
<keyword id="KW-0399">Innate immunity</keyword>
<keyword id="KW-0449">Lipoprotein</keyword>
<keyword id="KW-0460">Magnesium</keyword>
<keyword id="KW-0479">Metal-binding</keyword>
<keyword id="KW-0519">Myristate</keyword>
<keyword id="KW-0547">Nucleotide-binding</keyword>
<keyword id="KW-0548">Nucleotidyltransferase</keyword>
<keyword id="KW-1267">Proteomics identification</keyword>
<keyword id="KW-1185">Reference proteome</keyword>
<keyword id="KW-0677">Repeat</keyword>
<keyword id="KW-0694">RNA-binding</keyword>
<keyword id="KW-0808">Transferase</keyword>
<accession>P29728</accession>
<accession>A8K9T1</accession>
<accession>Q6PJ33</accession>
<accession>Q86XX8</accession>
<sequence>MGNGESQLSSVPAQKLGWFIQEYLKPYEECQTLIDEMVNTICDVLQEPEQFPLVQGVAIGGSYGRKTVLRGNSDGTLVLFFSDLKQFQDQKRSQRDILDKTGDKLKFCLFTKWLKNNFEIQKSLDGFTIQVFTKNQRISFEVLAAFNALSLNDNPSPWIYRELKRSLDKTNASPGEFAVCFTELQQKFFDNRPGKLKDLILLIKHWHQQCQKKIKDLPSLSPYALELLTVYAWEQGCRKDNFDIAEGVRTVLELIKCQEKLCIYWMVNYNFEDETIRNILLHQLQSARPVILDPVDPTNNVSGDKICWQWLKKEAQTWLTSPNLDNELPAPSWNVLPAPLFTTPGHLLDKFIKEFLQPNKCFLEQIDSAVNIIRTFLKENCFRQSTAKIQIVRGGSTAKGTALKTGSDADLVVFHNSLKSYTSQKNERHKIVKEIHEQLKAFWREKEEELEVSFEPPKWKAPRVLSFSLKSKVLNESVSFDVLPAFNALGQLSSGSTPSPEVYAGLIDLYKSSDLPGGEFSTCFTVLQRNFIRSRPTKLKDLIRLVKHWYKECERKLKPKGSLPPKYALELLTIYAWEQGSGVPDFDTAEGFRTVLELVTQYQQLCIFWKVNYNFEDETVRKFLLSQLQKTRPVILDPAEPTGDVGGGDRWCWHLLAKEAKEWLSSPCFKDGTGNPIPPWKVPTMQTPGSCGARIHPIVNEMFSSRSHRILNNNSKRNF</sequence>
<reference key="1">
    <citation type="journal article" date="1992" name="J. Biol. Chem.">
        <title>The 69-kDa 2-5A synthetase is composed of two homologous and adjacent functional domains.</title>
        <authorList>
            <person name="Marie I."/>
            <person name="Hovanessian A.G."/>
        </authorList>
    </citation>
    <scope>NUCLEOTIDE SEQUENCE [MRNA] (ISOFORMS P69 AND P71)</scope>
    <scope>INDUCTION</scope>
</reference>
<reference key="2">
    <citation type="journal article" date="2004" name="Nat. Genet.">
        <title>Complete sequencing and characterization of 21,243 full-length human cDNAs.</title>
        <authorList>
            <person name="Ota T."/>
            <person name="Suzuki Y."/>
            <person name="Nishikawa T."/>
            <person name="Otsuki T."/>
            <person name="Sugiyama T."/>
            <person name="Irie R."/>
            <person name="Wakamatsu A."/>
            <person name="Hayashi K."/>
            <person name="Sato H."/>
            <person name="Nagai K."/>
            <person name="Kimura K."/>
            <person name="Makita H."/>
            <person name="Sekine M."/>
            <person name="Obayashi M."/>
            <person name="Nishi T."/>
            <person name="Shibahara T."/>
            <person name="Tanaka T."/>
            <person name="Ishii S."/>
            <person name="Yamamoto J."/>
            <person name="Saito K."/>
            <person name="Kawai Y."/>
            <person name="Isono Y."/>
            <person name="Nakamura Y."/>
            <person name="Nagahari K."/>
            <person name="Murakami K."/>
            <person name="Yasuda T."/>
            <person name="Iwayanagi T."/>
            <person name="Wagatsuma M."/>
            <person name="Shiratori A."/>
            <person name="Sudo H."/>
            <person name="Hosoiri T."/>
            <person name="Kaku Y."/>
            <person name="Kodaira H."/>
            <person name="Kondo H."/>
            <person name="Sugawara M."/>
            <person name="Takahashi M."/>
            <person name="Kanda K."/>
            <person name="Yokoi T."/>
            <person name="Furuya T."/>
            <person name="Kikkawa E."/>
            <person name="Omura Y."/>
            <person name="Abe K."/>
            <person name="Kamihara K."/>
            <person name="Katsuta N."/>
            <person name="Sato K."/>
            <person name="Tanikawa M."/>
            <person name="Yamazaki M."/>
            <person name="Ninomiya K."/>
            <person name="Ishibashi T."/>
            <person name="Yamashita H."/>
            <person name="Murakawa K."/>
            <person name="Fujimori K."/>
            <person name="Tanai H."/>
            <person name="Kimata M."/>
            <person name="Watanabe M."/>
            <person name="Hiraoka S."/>
            <person name="Chiba Y."/>
            <person name="Ishida S."/>
            <person name="Ono Y."/>
            <person name="Takiguchi S."/>
            <person name="Watanabe S."/>
            <person name="Yosida M."/>
            <person name="Hotuta T."/>
            <person name="Kusano J."/>
            <person name="Kanehori K."/>
            <person name="Takahashi-Fujii A."/>
            <person name="Hara H."/>
            <person name="Tanase T.-O."/>
            <person name="Nomura Y."/>
            <person name="Togiya S."/>
            <person name="Komai F."/>
            <person name="Hara R."/>
            <person name="Takeuchi K."/>
            <person name="Arita M."/>
            <person name="Imose N."/>
            <person name="Musashino K."/>
            <person name="Yuuki H."/>
            <person name="Oshima A."/>
            <person name="Sasaki N."/>
            <person name="Aotsuka S."/>
            <person name="Yoshikawa Y."/>
            <person name="Matsunawa H."/>
            <person name="Ichihara T."/>
            <person name="Shiohata N."/>
            <person name="Sano S."/>
            <person name="Moriya S."/>
            <person name="Momiyama H."/>
            <person name="Satoh N."/>
            <person name="Takami S."/>
            <person name="Terashima Y."/>
            <person name="Suzuki O."/>
            <person name="Nakagawa S."/>
            <person name="Senoh A."/>
            <person name="Mizoguchi H."/>
            <person name="Goto Y."/>
            <person name="Shimizu F."/>
            <person name="Wakebe H."/>
            <person name="Hishigaki H."/>
            <person name="Watanabe T."/>
            <person name="Sugiyama A."/>
            <person name="Takemoto M."/>
            <person name="Kawakami B."/>
            <person name="Yamazaki M."/>
            <person name="Watanabe K."/>
            <person name="Kumagai A."/>
            <person name="Itakura S."/>
            <person name="Fukuzumi Y."/>
            <person name="Fujimori Y."/>
            <person name="Komiyama M."/>
            <person name="Tashiro H."/>
            <person name="Tanigami A."/>
            <person name="Fujiwara T."/>
            <person name="Ono T."/>
            <person name="Yamada K."/>
            <person name="Fujii Y."/>
            <person name="Ozaki K."/>
            <person name="Hirao M."/>
            <person name="Ohmori Y."/>
            <person name="Kawabata A."/>
            <person name="Hikiji T."/>
            <person name="Kobatake N."/>
            <person name="Inagaki H."/>
            <person name="Ikema Y."/>
            <person name="Okamoto S."/>
            <person name="Okitani R."/>
            <person name="Kawakami T."/>
            <person name="Noguchi S."/>
            <person name="Itoh T."/>
            <person name="Shigeta K."/>
            <person name="Senba T."/>
            <person name="Matsumura K."/>
            <person name="Nakajima Y."/>
            <person name="Mizuno T."/>
            <person name="Morinaga M."/>
            <person name="Sasaki M."/>
            <person name="Togashi T."/>
            <person name="Oyama M."/>
            <person name="Hata H."/>
            <person name="Watanabe M."/>
            <person name="Komatsu T."/>
            <person name="Mizushima-Sugano J."/>
            <person name="Satoh T."/>
            <person name="Shirai Y."/>
            <person name="Takahashi Y."/>
            <person name="Nakagawa K."/>
            <person name="Okumura K."/>
            <person name="Nagase T."/>
            <person name="Nomura N."/>
            <person name="Kikuchi H."/>
            <person name="Masuho Y."/>
            <person name="Yamashita R."/>
            <person name="Nakai K."/>
            <person name="Yada T."/>
            <person name="Nakamura Y."/>
            <person name="Ohara O."/>
            <person name="Isogai T."/>
            <person name="Sugano S."/>
        </authorList>
    </citation>
    <scope>NUCLEOTIDE SEQUENCE [LARGE SCALE MRNA] (ISOFORM P69)</scope>
    <source>
        <tissue>Trachea</tissue>
    </source>
</reference>
<reference key="3">
    <citation type="journal article" date="2006" name="Nature">
        <title>The finished DNA sequence of human chromosome 12.</title>
        <authorList>
            <person name="Scherer S.E."/>
            <person name="Muzny D.M."/>
            <person name="Buhay C.J."/>
            <person name="Chen R."/>
            <person name="Cree A."/>
            <person name="Ding Y."/>
            <person name="Dugan-Rocha S."/>
            <person name="Gill R."/>
            <person name="Gunaratne P."/>
            <person name="Harris R.A."/>
            <person name="Hawes A.C."/>
            <person name="Hernandez J."/>
            <person name="Hodgson A.V."/>
            <person name="Hume J."/>
            <person name="Jackson A."/>
            <person name="Khan Z.M."/>
            <person name="Kovar-Smith C."/>
            <person name="Lewis L.R."/>
            <person name="Lozado R.J."/>
            <person name="Metzker M.L."/>
            <person name="Milosavljevic A."/>
            <person name="Miner G.R."/>
            <person name="Montgomery K.T."/>
            <person name="Morgan M.B."/>
            <person name="Nazareth L.V."/>
            <person name="Scott G."/>
            <person name="Sodergren E."/>
            <person name="Song X.-Z."/>
            <person name="Steffen D."/>
            <person name="Lovering R.C."/>
            <person name="Wheeler D.A."/>
            <person name="Worley K.C."/>
            <person name="Yuan Y."/>
            <person name="Zhang Z."/>
            <person name="Adams C.Q."/>
            <person name="Ansari-Lari M.A."/>
            <person name="Ayele M."/>
            <person name="Brown M.J."/>
            <person name="Chen G."/>
            <person name="Chen Z."/>
            <person name="Clerc-Blankenburg K.P."/>
            <person name="Davis C."/>
            <person name="Delgado O."/>
            <person name="Dinh H.H."/>
            <person name="Draper H."/>
            <person name="Gonzalez-Garay M.L."/>
            <person name="Havlak P."/>
            <person name="Jackson L.R."/>
            <person name="Jacob L.S."/>
            <person name="Kelly S.H."/>
            <person name="Li L."/>
            <person name="Li Z."/>
            <person name="Liu J."/>
            <person name="Liu W."/>
            <person name="Lu J."/>
            <person name="Maheshwari M."/>
            <person name="Nguyen B.-V."/>
            <person name="Okwuonu G.O."/>
            <person name="Pasternak S."/>
            <person name="Perez L.M."/>
            <person name="Plopper F.J.H."/>
            <person name="Santibanez J."/>
            <person name="Shen H."/>
            <person name="Tabor P.E."/>
            <person name="Verduzco D."/>
            <person name="Waldron L."/>
            <person name="Wang Q."/>
            <person name="Williams G.A."/>
            <person name="Zhang J."/>
            <person name="Zhou J."/>
            <person name="Allen C.C."/>
            <person name="Amin A.G."/>
            <person name="Anyalebechi V."/>
            <person name="Bailey M."/>
            <person name="Barbaria J.A."/>
            <person name="Bimage K.E."/>
            <person name="Bryant N.P."/>
            <person name="Burch P.E."/>
            <person name="Burkett C.E."/>
            <person name="Burrell K.L."/>
            <person name="Calderon E."/>
            <person name="Cardenas V."/>
            <person name="Carter K."/>
            <person name="Casias K."/>
            <person name="Cavazos I."/>
            <person name="Cavazos S.R."/>
            <person name="Ceasar H."/>
            <person name="Chacko J."/>
            <person name="Chan S.N."/>
            <person name="Chavez D."/>
            <person name="Christopoulos C."/>
            <person name="Chu J."/>
            <person name="Cockrell R."/>
            <person name="Cox C.D."/>
            <person name="Dang M."/>
            <person name="Dathorne S.R."/>
            <person name="David R."/>
            <person name="Davis C.M."/>
            <person name="Davy-Carroll L."/>
            <person name="Deshazo D.R."/>
            <person name="Donlin J.E."/>
            <person name="D'Souza L."/>
            <person name="Eaves K.A."/>
            <person name="Egan A."/>
            <person name="Emery-Cohen A.J."/>
            <person name="Escotto M."/>
            <person name="Flagg N."/>
            <person name="Forbes L.D."/>
            <person name="Gabisi A.M."/>
            <person name="Garza M."/>
            <person name="Hamilton C."/>
            <person name="Henderson N."/>
            <person name="Hernandez O."/>
            <person name="Hines S."/>
            <person name="Hogues M.E."/>
            <person name="Huang M."/>
            <person name="Idlebird D.G."/>
            <person name="Johnson R."/>
            <person name="Jolivet A."/>
            <person name="Jones S."/>
            <person name="Kagan R."/>
            <person name="King L.M."/>
            <person name="Leal B."/>
            <person name="Lebow H."/>
            <person name="Lee S."/>
            <person name="LeVan J.M."/>
            <person name="Lewis L.C."/>
            <person name="London P."/>
            <person name="Lorensuhewa L.M."/>
            <person name="Loulseged H."/>
            <person name="Lovett D.A."/>
            <person name="Lucier A."/>
            <person name="Lucier R.L."/>
            <person name="Ma J."/>
            <person name="Madu R.C."/>
            <person name="Mapua P."/>
            <person name="Martindale A.D."/>
            <person name="Martinez E."/>
            <person name="Massey E."/>
            <person name="Mawhiney S."/>
            <person name="Meador M.G."/>
            <person name="Mendez S."/>
            <person name="Mercado C."/>
            <person name="Mercado I.C."/>
            <person name="Merritt C.E."/>
            <person name="Miner Z.L."/>
            <person name="Minja E."/>
            <person name="Mitchell T."/>
            <person name="Mohabbat F."/>
            <person name="Mohabbat K."/>
            <person name="Montgomery B."/>
            <person name="Moore N."/>
            <person name="Morris S."/>
            <person name="Munidasa M."/>
            <person name="Ngo R.N."/>
            <person name="Nguyen N.B."/>
            <person name="Nickerson E."/>
            <person name="Nwaokelemeh O.O."/>
            <person name="Nwokenkwo S."/>
            <person name="Obregon M."/>
            <person name="Oguh M."/>
            <person name="Oragunye N."/>
            <person name="Oviedo R.J."/>
            <person name="Parish B.J."/>
            <person name="Parker D.N."/>
            <person name="Parrish J."/>
            <person name="Parks K.L."/>
            <person name="Paul H.A."/>
            <person name="Payton B.A."/>
            <person name="Perez A."/>
            <person name="Perrin W."/>
            <person name="Pickens A."/>
            <person name="Primus E.L."/>
            <person name="Pu L.-L."/>
            <person name="Puazo M."/>
            <person name="Quiles M.M."/>
            <person name="Quiroz J.B."/>
            <person name="Rabata D."/>
            <person name="Reeves K."/>
            <person name="Ruiz S.J."/>
            <person name="Shao H."/>
            <person name="Sisson I."/>
            <person name="Sonaike T."/>
            <person name="Sorelle R.P."/>
            <person name="Sutton A.E."/>
            <person name="Svatek A.F."/>
            <person name="Svetz L.A."/>
            <person name="Tamerisa K.S."/>
            <person name="Taylor T.R."/>
            <person name="Teague B."/>
            <person name="Thomas N."/>
            <person name="Thorn R.D."/>
            <person name="Trejos Z.Y."/>
            <person name="Trevino B.K."/>
            <person name="Ukegbu O.N."/>
            <person name="Urban J.B."/>
            <person name="Vasquez L.I."/>
            <person name="Vera V.A."/>
            <person name="Villasana D.M."/>
            <person name="Wang L."/>
            <person name="Ward-Moore S."/>
            <person name="Warren J.T."/>
            <person name="Wei X."/>
            <person name="White F."/>
            <person name="Williamson A.L."/>
            <person name="Wleczyk R."/>
            <person name="Wooden H.S."/>
            <person name="Wooden S.H."/>
            <person name="Yen J."/>
            <person name="Yoon L."/>
            <person name="Yoon V."/>
            <person name="Zorrilla S.E."/>
            <person name="Nelson D."/>
            <person name="Kucherlapati R."/>
            <person name="Weinstock G."/>
            <person name="Gibbs R.A."/>
        </authorList>
    </citation>
    <scope>NUCLEOTIDE SEQUENCE [LARGE SCALE GENOMIC DNA]</scope>
</reference>
<reference key="4">
    <citation type="submission" date="2005-07" db="EMBL/GenBank/DDBJ databases">
        <authorList>
            <person name="Mural R.J."/>
            <person name="Istrail S."/>
            <person name="Sutton G.G."/>
            <person name="Florea L."/>
            <person name="Halpern A.L."/>
            <person name="Mobarry C.M."/>
            <person name="Lippert R."/>
            <person name="Walenz B."/>
            <person name="Shatkay H."/>
            <person name="Dew I."/>
            <person name="Miller J.R."/>
            <person name="Flanigan M.J."/>
            <person name="Edwards N.J."/>
            <person name="Bolanos R."/>
            <person name="Fasulo D."/>
            <person name="Halldorsson B.V."/>
            <person name="Hannenhalli S."/>
            <person name="Turner R."/>
            <person name="Yooseph S."/>
            <person name="Lu F."/>
            <person name="Nusskern D.R."/>
            <person name="Shue B.C."/>
            <person name="Zheng X.H."/>
            <person name="Zhong F."/>
            <person name="Delcher A.L."/>
            <person name="Huson D.H."/>
            <person name="Kravitz S.A."/>
            <person name="Mouchard L."/>
            <person name="Reinert K."/>
            <person name="Remington K.A."/>
            <person name="Clark A.G."/>
            <person name="Waterman M.S."/>
            <person name="Eichler E.E."/>
            <person name="Adams M.D."/>
            <person name="Hunkapiller M.W."/>
            <person name="Myers E.W."/>
            <person name="Venter J.C."/>
        </authorList>
    </citation>
    <scope>NUCLEOTIDE SEQUENCE [LARGE SCALE GENOMIC DNA]</scope>
</reference>
<reference key="5">
    <citation type="journal article" date="2004" name="Genome Res.">
        <title>The status, quality, and expansion of the NIH full-length cDNA project: the Mammalian Gene Collection (MGC).</title>
        <authorList>
            <consortium name="The MGC Project Team"/>
        </authorList>
    </citation>
    <scope>NUCLEOTIDE SEQUENCE [LARGE SCALE MRNA] (ISOFORMS P69 AND 3)</scope>
    <source>
        <tissue>Blood</tissue>
        <tissue>Uterus</tissue>
    </source>
</reference>
<reference key="6">
    <citation type="journal article" date="2002" name="J. Biol. Chem.">
        <title>Identification of the substrate-binding sites of 2'-5'-oligoadenylate synthetase.</title>
        <authorList>
            <person name="Sarkar S.N."/>
            <person name="Miyagi M."/>
            <person name="Crabb J.W."/>
            <person name="Sen G.C."/>
        </authorList>
    </citation>
    <scope>PROTEIN SEQUENCE OF 420-425 AND 539-547</scope>
    <scope>IDENTIFICATION BY MASS SPECTROMETRY</scope>
    <scope>CATALYTIC ACTIVITY</scope>
    <scope>BIOPHYSICOCHEMICAL PROPERTIES</scope>
    <scope>MUTAGENESIS OF TYR-421; ARG-544 AND LYS-547</scope>
</reference>
<reference key="7">
    <citation type="journal article" date="1990" name="J. Biol. Chem.">
        <title>Differential expression and distinct structure of 69- and 100-kDa forms of 2-5A synthetase in human cells treated with interferon.</title>
        <authorList>
            <person name="Marie I."/>
            <person name="Svab J."/>
            <person name="Robert N."/>
            <person name="Galabru J."/>
            <person name="Hovanessian A.G."/>
        </authorList>
    </citation>
    <scope>MYRISTOYLATION AT GLY-2</scope>
</reference>
<reference key="8">
    <citation type="journal article" date="1999" name="J. Biol. Chem.">
        <title>Enzymatic characteristics of recombinant medium isozyme of 2'-5' oligoadenylate synthetase.</title>
        <authorList>
            <person name="Sarkar S.N."/>
            <person name="Bandyopadhyay S."/>
            <person name="Ghosh A."/>
            <person name="Sen G.C."/>
        </authorList>
    </citation>
    <scope>FUNCTION</scope>
    <scope>BIOPHYSICOCHEMICAL PROPERTIES</scope>
    <scope>CATALYTIC ACTIVITY</scope>
    <scope>SUBUNIT</scope>
    <scope>ACTIVITY REGULATION</scope>
    <scope>GLYCOSYLATION</scope>
    <scope>MYRISTOYLATION</scope>
    <scope>MUTAGENESIS OF GLY-2</scope>
</reference>
<reference key="9">
    <citation type="journal article" date="1999" name="J. Biol. Chem.">
        <title>The nature of the catalytic domain of 2'-5'-oligoadenylate synthetases.</title>
        <authorList>
            <person name="Sarkar S.N."/>
            <person name="Ghosh A."/>
            <person name="Wang H.W."/>
            <person name="Sung S.S."/>
            <person name="Sen G.C."/>
        </authorList>
    </citation>
    <scope>FUNCTION</scope>
    <scope>SUBUNIT</scope>
    <scope>CATALYTIC ACTIVITY</scope>
    <scope>BIOPHYSICOCHEMICAL PROPERTIES</scope>
    <scope>MUTAGENESIS OF ASP-408; ASP-410; ASP-481; CYS-668; PHE-669 AND LYS-670</scope>
</reference>
<reference key="10">
    <citation type="journal article" date="2001" name="FEBS Lett.">
        <title>Inhibition of 2'-5' oligoadenylate synthetase by divalent metal ions.</title>
        <authorList>
            <person name="Hartmann R."/>
            <person name="Walko G."/>
            <person name="Justesen J."/>
        </authorList>
    </citation>
    <scope>FUNCTION</scope>
    <scope>CATALYTIC ACTIVITY</scope>
    <scope>COFACTOR</scope>
</reference>
<reference key="11">
    <citation type="journal article" date="2007" name="Biochimie">
        <title>The human 2'-5'oligoadenylate synthetase family: unique interferon-inducible enzymes catalyzing 2'-5' instead of 3'-5' phosphodiester bond formation.</title>
        <authorList>
            <person name="Hovanessian A.G."/>
            <person name="Justesen J."/>
        </authorList>
    </citation>
    <scope>REVIEW ON FUNCTION</scope>
</reference>
<reference key="12">
    <citation type="journal article" date="2009" name="J. Immunol.">
        <title>Distinct antiviral roles for human 2',5'-oligoadenylate synthetase family members against dengue virus infection.</title>
        <authorList>
            <person name="Lin R.J."/>
            <person name="Yu H.P."/>
            <person name="Chang B.L."/>
            <person name="Tang W.C."/>
            <person name="Liao C.L."/>
            <person name="Lin Y.L."/>
        </authorList>
    </citation>
    <scope>FUNCTION</scope>
    <scope>SUBCELLULAR LOCATION</scope>
</reference>
<reference key="13">
    <citation type="journal article" date="2009" name="J. Mol. Evol.">
        <title>Evolution of the 2'-5'-oligoadenylate synthetase family in eukaryotes and bacteria.</title>
        <authorList>
            <person name="Kjaer K.H."/>
            <person name="Poulsen J.B."/>
            <person name="Reintamm T."/>
            <person name="Saby E."/>
            <person name="Martensen P.M."/>
            <person name="Kelve M."/>
            <person name="Justesen J."/>
        </authorList>
    </citation>
    <scope>REVIEW</scope>
</reference>
<reference key="14">
    <citation type="journal article" date="2009" name="Science">
        <title>Lysine acetylation targets protein complexes and co-regulates major cellular functions.</title>
        <authorList>
            <person name="Choudhary C."/>
            <person name="Kumar C."/>
            <person name="Gnad F."/>
            <person name="Nielsen M.L."/>
            <person name="Rehman M."/>
            <person name="Walther T.C."/>
            <person name="Olsen J.V."/>
            <person name="Mann M."/>
        </authorList>
    </citation>
    <scope>ACETYLATION [LARGE SCALE ANALYSIS] AT LYS-378</scope>
    <scope>IDENTIFICATION BY MASS SPECTROMETRY [LARGE SCALE ANALYSIS]</scope>
</reference>
<reference key="15">
    <citation type="journal article" date="2011" name="BMC Syst. Biol.">
        <title>Initial characterization of the human central proteome.</title>
        <authorList>
            <person name="Burkard T.R."/>
            <person name="Planyavsky M."/>
            <person name="Kaupe I."/>
            <person name="Breitwieser F.P."/>
            <person name="Buerckstuemmer T."/>
            <person name="Bennett K.L."/>
            <person name="Superti-Furga G."/>
            <person name="Colinge J."/>
        </authorList>
    </citation>
    <scope>IDENTIFICATION BY MASS SPECTROMETRY [LARGE SCALE ANALYSIS]</scope>
</reference>
<reference key="16">
    <citation type="journal article" date="2011" name="J. Interferon Cytokine Res.">
        <title>The oligoadenylate synthetase family: an ancient protein family with multiple antiviral activities.</title>
        <authorList>
            <person name="Kristiansen H."/>
            <person name="Gad H.H."/>
            <person name="Eskildsen-Larsen S."/>
            <person name="Despres P."/>
            <person name="Hartmann R."/>
        </authorList>
    </citation>
    <scope>REVIEW ON FUNCTION</scope>
</reference>
<reference key="17">
    <citation type="journal article" date="2014" name="J. Proteomics">
        <title>An enzyme assisted RP-RPLC approach for in-depth analysis of human liver phosphoproteome.</title>
        <authorList>
            <person name="Bian Y."/>
            <person name="Song C."/>
            <person name="Cheng K."/>
            <person name="Dong M."/>
            <person name="Wang F."/>
            <person name="Huang J."/>
            <person name="Sun D."/>
            <person name="Wang L."/>
            <person name="Ye M."/>
            <person name="Zou H."/>
        </authorList>
    </citation>
    <scope>IDENTIFICATION BY MASS SPECTROMETRY [LARGE SCALE ANALYSIS]</scope>
    <source>
        <tissue>Liver</tissue>
    </source>
</reference>
<dbReference type="EC" id="2.7.7.84" evidence="4 6 10"/>
<dbReference type="EMBL" id="M87434">
    <property type="protein sequence ID" value="AAA60607.1"/>
    <property type="molecule type" value="mRNA"/>
</dbReference>
<dbReference type="EMBL" id="M87284">
    <property type="protein sequence ID" value="AAA60606.1"/>
    <property type="molecule type" value="mRNA"/>
</dbReference>
<dbReference type="EMBL" id="AK292796">
    <property type="protein sequence ID" value="BAF85485.1"/>
    <property type="molecule type" value="mRNA"/>
</dbReference>
<dbReference type="EMBL" id="AC004551">
    <property type="status" value="NOT_ANNOTATED_CDS"/>
    <property type="molecule type" value="Genomic_DNA"/>
</dbReference>
<dbReference type="EMBL" id="CH471054">
    <property type="protein sequence ID" value="EAW98027.1"/>
    <property type="molecule type" value="Genomic_DNA"/>
</dbReference>
<dbReference type="EMBL" id="BC023637">
    <property type="protein sequence ID" value="AAH23637.1"/>
    <property type="molecule type" value="mRNA"/>
</dbReference>
<dbReference type="EMBL" id="BC049215">
    <property type="protein sequence ID" value="AAH49215.1"/>
    <property type="molecule type" value="mRNA"/>
</dbReference>
<dbReference type="CCDS" id="CCDS31906.1">
    <molecule id="P29728-1"/>
</dbReference>
<dbReference type="CCDS" id="CCDS41839.1">
    <molecule id="P29728-2"/>
</dbReference>
<dbReference type="CCDS" id="CCDS44982.1">
    <molecule id="P29728-3"/>
</dbReference>
<dbReference type="PIR" id="B42665">
    <property type="entry name" value="B42665"/>
</dbReference>
<dbReference type="RefSeq" id="NP_001027903.1">
    <molecule id="P29728-3"/>
    <property type="nucleotide sequence ID" value="NM_001032731.2"/>
</dbReference>
<dbReference type="RefSeq" id="NP_002526.2">
    <molecule id="P29728-2"/>
    <property type="nucleotide sequence ID" value="NM_002535.3"/>
</dbReference>
<dbReference type="RefSeq" id="NP_058197.2">
    <molecule id="P29728-1"/>
    <property type="nucleotide sequence ID" value="NM_016817.3"/>
</dbReference>
<dbReference type="SMR" id="P29728"/>
<dbReference type="BioGRID" id="110993">
    <property type="interactions" value="19"/>
</dbReference>
<dbReference type="FunCoup" id="P29728">
    <property type="interactions" value="721"/>
</dbReference>
<dbReference type="IntAct" id="P29728">
    <property type="interactions" value="8"/>
</dbReference>
<dbReference type="STRING" id="9606.ENSP00000342278"/>
<dbReference type="GlyGen" id="P29728">
    <property type="glycosylation" value="1 site"/>
</dbReference>
<dbReference type="iPTMnet" id="P29728"/>
<dbReference type="PhosphoSitePlus" id="P29728"/>
<dbReference type="BioMuta" id="OAS2"/>
<dbReference type="DMDM" id="116242687"/>
<dbReference type="jPOST" id="P29728"/>
<dbReference type="MassIVE" id="P29728"/>
<dbReference type="PaxDb" id="9606-ENSP00000342278"/>
<dbReference type="PeptideAtlas" id="P29728"/>
<dbReference type="ProteomicsDB" id="54606">
    <molecule id="P29728-1"/>
</dbReference>
<dbReference type="ProteomicsDB" id="54607">
    <molecule id="P29728-2"/>
</dbReference>
<dbReference type="ProteomicsDB" id="54608">
    <molecule id="P29728-3"/>
</dbReference>
<dbReference type="Antibodypedia" id="31214">
    <property type="antibodies" value="449 antibodies from 31 providers"/>
</dbReference>
<dbReference type="DNASU" id="4939"/>
<dbReference type="Ensembl" id="ENST00000342315.8">
    <molecule id="P29728-1"/>
    <property type="protein sequence ID" value="ENSP00000342278.4"/>
    <property type="gene ID" value="ENSG00000111335.14"/>
</dbReference>
<dbReference type="Ensembl" id="ENST00000392583.7">
    <molecule id="P29728-2"/>
    <property type="protein sequence ID" value="ENSP00000376362.3"/>
    <property type="gene ID" value="ENSG00000111335.14"/>
</dbReference>
<dbReference type="Ensembl" id="ENST00000449768.2">
    <molecule id="P29728-3"/>
    <property type="protein sequence ID" value="ENSP00000411763.2"/>
    <property type="gene ID" value="ENSG00000111335.14"/>
</dbReference>
<dbReference type="GeneID" id="4939"/>
<dbReference type="KEGG" id="hsa:4939"/>
<dbReference type="MANE-Select" id="ENST00000392583.7">
    <molecule id="P29728-2"/>
    <property type="protein sequence ID" value="ENSP00000376362.3"/>
    <property type="RefSeq nucleotide sequence ID" value="NM_002535.3"/>
    <property type="RefSeq protein sequence ID" value="NP_002526.2"/>
</dbReference>
<dbReference type="UCSC" id="uc001tuh.4">
    <molecule id="P29728-1"/>
    <property type="organism name" value="human"/>
</dbReference>
<dbReference type="AGR" id="HGNC:8087"/>
<dbReference type="CTD" id="4939"/>
<dbReference type="DisGeNET" id="4939"/>
<dbReference type="GeneCards" id="OAS2"/>
<dbReference type="HGNC" id="HGNC:8087">
    <property type="gene designation" value="OAS2"/>
</dbReference>
<dbReference type="HPA" id="ENSG00000111335">
    <property type="expression patterns" value="Tissue enhanced (salivary)"/>
</dbReference>
<dbReference type="MIM" id="603350">
    <property type="type" value="gene"/>
</dbReference>
<dbReference type="neXtProt" id="NX_P29728"/>
<dbReference type="OpenTargets" id="ENSG00000111335"/>
<dbReference type="PharmGKB" id="PA31876"/>
<dbReference type="VEuPathDB" id="HostDB:ENSG00000111335"/>
<dbReference type="eggNOG" id="ENOG502S649">
    <property type="taxonomic scope" value="Eukaryota"/>
</dbReference>
<dbReference type="GeneTree" id="ENSGT00510000046406"/>
<dbReference type="HOGENOM" id="CLU_026275_0_0_1"/>
<dbReference type="InParanoid" id="P29728"/>
<dbReference type="OMA" id="KQCERKM"/>
<dbReference type="OrthoDB" id="1885901at2759"/>
<dbReference type="PAN-GO" id="P29728">
    <property type="GO annotations" value="8 GO annotations based on evolutionary models"/>
</dbReference>
<dbReference type="PhylomeDB" id="P29728"/>
<dbReference type="TreeFam" id="TF329749"/>
<dbReference type="BioCyc" id="MetaCyc:ENSG00000111335-MONOMER"/>
<dbReference type="BRENDA" id="2.7.7.84">
    <property type="organism ID" value="2681"/>
</dbReference>
<dbReference type="PathwayCommons" id="P29728"/>
<dbReference type="Reactome" id="R-HSA-877300">
    <property type="pathway name" value="Interferon gamma signaling"/>
</dbReference>
<dbReference type="Reactome" id="R-HSA-8983711">
    <property type="pathway name" value="OAS antiviral response"/>
</dbReference>
<dbReference type="Reactome" id="R-HSA-909733">
    <property type="pathway name" value="Interferon alpha/beta signaling"/>
</dbReference>
<dbReference type="Reactome" id="R-HSA-9833110">
    <property type="pathway name" value="RSV-host interactions"/>
</dbReference>
<dbReference type="SABIO-RK" id="P29728"/>
<dbReference type="SignaLink" id="P29728"/>
<dbReference type="BioGRID-ORCS" id="4939">
    <property type="hits" value="17 hits in 1164 CRISPR screens"/>
</dbReference>
<dbReference type="CD-CODE" id="DEE660B4">
    <property type="entry name" value="Stress granule"/>
</dbReference>
<dbReference type="ChiTaRS" id="OAS2">
    <property type="organism name" value="human"/>
</dbReference>
<dbReference type="GeneWiki" id="OAS2"/>
<dbReference type="GenomeRNAi" id="4939"/>
<dbReference type="Pharos" id="P29728">
    <property type="development level" value="Tbio"/>
</dbReference>
<dbReference type="PRO" id="PR:P29728"/>
<dbReference type="Proteomes" id="UP000005640">
    <property type="component" value="Chromosome 12"/>
</dbReference>
<dbReference type="RNAct" id="P29728">
    <property type="molecule type" value="protein"/>
</dbReference>
<dbReference type="Bgee" id="ENSG00000111335">
    <property type="expression patterns" value="Expressed in monocyte and 146 other cell types or tissues"/>
</dbReference>
<dbReference type="ExpressionAtlas" id="P29728">
    <property type="expression patterns" value="baseline and differential"/>
</dbReference>
<dbReference type="GO" id="GO:0005737">
    <property type="term" value="C:cytoplasm"/>
    <property type="evidence" value="ECO:0000314"/>
    <property type="project" value="UniProtKB"/>
</dbReference>
<dbReference type="GO" id="GO:0005829">
    <property type="term" value="C:cytosol"/>
    <property type="evidence" value="ECO:0000318"/>
    <property type="project" value="GO_Central"/>
</dbReference>
<dbReference type="GO" id="GO:0043231">
    <property type="term" value="C:intracellular membrane-bounded organelle"/>
    <property type="evidence" value="ECO:0000304"/>
    <property type="project" value="ProtInc"/>
</dbReference>
<dbReference type="GO" id="GO:0016020">
    <property type="term" value="C:membrane"/>
    <property type="evidence" value="ECO:0007005"/>
    <property type="project" value="UniProtKB"/>
</dbReference>
<dbReference type="GO" id="GO:0005654">
    <property type="term" value="C:nucleoplasm"/>
    <property type="evidence" value="ECO:0000318"/>
    <property type="project" value="GO_Central"/>
</dbReference>
<dbReference type="GO" id="GO:0048471">
    <property type="term" value="C:perinuclear region of cytoplasm"/>
    <property type="evidence" value="ECO:0000314"/>
    <property type="project" value="UniProtKB"/>
</dbReference>
<dbReference type="GO" id="GO:0001730">
    <property type="term" value="F:2'-5'-oligoadenylate synthetase activity"/>
    <property type="evidence" value="ECO:0000314"/>
    <property type="project" value="UniProtKB"/>
</dbReference>
<dbReference type="GO" id="GO:0005524">
    <property type="term" value="F:ATP binding"/>
    <property type="evidence" value="ECO:0000315"/>
    <property type="project" value="UniProtKB"/>
</dbReference>
<dbReference type="GO" id="GO:0003725">
    <property type="term" value="F:double-stranded RNA binding"/>
    <property type="evidence" value="ECO:0000314"/>
    <property type="project" value="UniProtKB"/>
</dbReference>
<dbReference type="GO" id="GO:0046872">
    <property type="term" value="F:metal ion binding"/>
    <property type="evidence" value="ECO:0007669"/>
    <property type="project" value="UniProtKB-KW"/>
</dbReference>
<dbReference type="GO" id="GO:0140374">
    <property type="term" value="P:antiviral innate immune response"/>
    <property type="evidence" value="ECO:0000318"/>
    <property type="project" value="GO_Central"/>
</dbReference>
<dbReference type="GO" id="GO:0042742">
    <property type="term" value="P:defense response to bacterium"/>
    <property type="evidence" value="ECO:0000315"/>
    <property type="project" value="ARUK-UCL"/>
</dbReference>
<dbReference type="GO" id="GO:0051607">
    <property type="term" value="P:defense response to virus"/>
    <property type="evidence" value="ECO:0000250"/>
    <property type="project" value="UniProtKB"/>
</dbReference>
<dbReference type="GO" id="GO:0070106">
    <property type="term" value="P:interleukin-27-mediated signaling pathway"/>
    <property type="evidence" value="ECO:0000314"/>
    <property type="project" value="ARUK-UCL"/>
</dbReference>
<dbReference type="GO" id="GO:0045071">
    <property type="term" value="P:negative regulation of viral genome replication"/>
    <property type="evidence" value="ECO:0000318"/>
    <property type="project" value="GO_Central"/>
</dbReference>
<dbReference type="GO" id="GO:0006139">
    <property type="term" value="P:nucleobase-containing compound metabolic process"/>
    <property type="evidence" value="ECO:0000304"/>
    <property type="project" value="ProtInc"/>
</dbReference>
<dbReference type="GO" id="GO:0032728">
    <property type="term" value="P:positive regulation of interferon-beta production"/>
    <property type="evidence" value="ECO:0000315"/>
    <property type="project" value="ARUK-UCL"/>
</dbReference>
<dbReference type="GO" id="GO:0032760">
    <property type="term" value="P:positive regulation of tumor necrosis factor production"/>
    <property type="evidence" value="ECO:0000315"/>
    <property type="project" value="ARUK-UCL"/>
</dbReference>
<dbReference type="GO" id="GO:1903487">
    <property type="term" value="P:regulation of lactation"/>
    <property type="evidence" value="ECO:0000250"/>
    <property type="project" value="UniProtKB"/>
</dbReference>
<dbReference type="GO" id="GO:0009615">
    <property type="term" value="P:response to virus"/>
    <property type="evidence" value="ECO:0000304"/>
    <property type="project" value="UniProtKB"/>
</dbReference>
<dbReference type="GO" id="GO:0006401">
    <property type="term" value="P:RNA catabolic process"/>
    <property type="evidence" value="ECO:0007669"/>
    <property type="project" value="Ensembl"/>
</dbReference>
<dbReference type="GO" id="GO:0060337">
    <property type="term" value="P:type I interferon-mediated signaling pathway"/>
    <property type="evidence" value="ECO:0000250"/>
    <property type="project" value="UniProtKB"/>
</dbReference>
<dbReference type="CDD" id="cd05400">
    <property type="entry name" value="NT_2-5OAS_ClassI-CCAase"/>
    <property type="match status" value="2"/>
</dbReference>
<dbReference type="FunFam" id="1.10.1410.20:FF:000001">
    <property type="entry name" value="2'-5'-oligoadenylate synthetase 1"/>
    <property type="match status" value="2"/>
</dbReference>
<dbReference type="FunFam" id="3.30.460.10:FF:000007">
    <property type="entry name" value="2'-5'-oligoadenylate synthetase 1"/>
    <property type="match status" value="2"/>
</dbReference>
<dbReference type="Gene3D" id="1.10.1410.20">
    <property type="entry name" value="2'-5'-oligoadenylate synthetase 1, domain 2"/>
    <property type="match status" value="2"/>
</dbReference>
<dbReference type="Gene3D" id="3.30.460.10">
    <property type="entry name" value="Beta Polymerase, domain 2"/>
    <property type="match status" value="2"/>
</dbReference>
<dbReference type="InterPro" id="IPR018952">
    <property type="entry name" value="2-5-oligoAdlate_synth_1_dom2/C"/>
</dbReference>
<dbReference type="InterPro" id="IPR006117">
    <property type="entry name" value="2-5OAS_C_CS"/>
</dbReference>
<dbReference type="InterPro" id="IPR043518">
    <property type="entry name" value="2-5OAS_N_CS"/>
</dbReference>
<dbReference type="InterPro" id="IPR006116">
    <property type="entry name" value="NT_2-5OAS_ClassI-CCAase"/>
</dbReference>
<dbReference type="InterPro" id="IPR043519">
    <property type="entry name" value="NT_sf"/>
</dbReference>
<dbReference type="InterPro" id="IPR002934">
    <property type="entry name" value="Polymerase_NTP_transf_dom"/>
</dbReference>
<dbReference type="PANTHER" id="PTHR11258:SF3">
    <property type="entry name" value="2'-5'-OLIGOADENYLATE SYNTHASE 2"/>
    <property type="match status" value="1"/>
</dbReference>
<dbReference type="PANTHER" id="PTHR11258">
    <property type="entry name" value="2-5 OLIGOADENYLATE SYNTHETASE"/>
    <property type="match status" value="1"/>
</dbReference>
<dbReference type="Pfam" id="PF01909">
    <property type="entry name" value="NTP_transf_2"/>
    <property type="match status" value="1"/>
</dbReference>
<dbReference type="Pfam" id="PF10421">
    <property type="entry name" value="OAS1_C"/>
    <property type="match status" value="2"/>
</dbReference>
<dbReference type="SUPFAM" id="SSF81301">
    <property type="entry name" value="Nucleotidyltransferase"/>
    <property type="match status" value="2"/>
</dbReference>
<dbReference type="SUPFAM" id="SSF81631">
    <property type="entry name" value="PAP/OAS1 substrate-binding domain"/>
    <property type="match status" value="2"/>
</dbReference>
<dbReference type="PROSITE" id="PS00832">
    <property type="entry name" value="25A_SYNTH_1"/>
    <property type="match status" value="2"/>
</dbReference>
<dbReference type="PROSITE" id="PS00833">
    <property type="entry name" value="25A_SYNTH_2"/>
    <property type="match status" value="2"/>
</dbReference>
<dbReference type="PROSITE" id="PS50152">
    <property type="entry name" value="25A_SYNTH_3"/>
    <property type="match status" value="2"/>
</dbReference>
<proteinExistence type="evidence at protein level"/>